<feature type="chain" id="PRO_1000134977" description="Imidazole glycerol phosphate synthase subunit HisF">
    <location>
        <begin position="1"/>
        <end position="257"/>
    </location>
</feature>
<feature type="active site" evidence="1">
    <location>
        <position position="12"/>
    </location>
</feature>
<feature type="active site" evidence="1">
    <location>
        <position position="131"/>
    </location>
</feature>
<proteinExistence type="inferred from homology"/>
<reference key="1">
    <citation type="journal article" date="2008" name="J. Bacteriol.">
        <title>Insights into plant cell wall degradation from the genome sequence of the soil bacterium Cellvibrio japonicus.</title>
        <authorList>
            <person name="DeBoy R.T."/>
            <person name="Mongodin E.F."/>
            <person name="Fouts D.E."/>
            <person name="Tailford L.E."/>
            <person name="Khouri H."/>
            <person name="Emerson J.B."/>
            <person name="Mohamoud Y."/>
            <person name="Watkins K."/>
            <person name="Henrissat B."/>
            <person name="Gilbert H.J."/>
            <person name="Nelson K.E."/>
        </authorList>
    </citation>
    <scope>NUCLEOTIDE SEQUENCE [LARGE SCALE GENOMIC DNA]</scope>
    <source>
        <strain>Ueda107</strain>
    </source>
</reference>
<gene>
    <name evidence="1" type="primary">hisF</name>
    <name type="ordered locus">CJA_0159</name>
</gene>
<keyword id="KW-0028">Amino-acid biosynthesis</keyword>
<keyword id="KW-0963">Cytoplasm</keyword>
<keyword id="KW-0368">Histidine biosynthesis</keyword>
<keyword id="KW-0456">Lyase</keyword>
<keyword id="KW-1185">Reference proteome</keyword>
<sequence>MPLAKRIIPCLDVDNGRVVKGVKFLDIRDAGDPVEIAKRYNQEGADEITFLDITATHEGRDTTVHTVEKIASEVFIPLTVGGGIRTVDDIRTMLNAGADKVSINSAAVFNPDFVKAASDRFGAQCIVVAIDAKKVSAEGEMPRWEIFTHGGRKPTGIDAVEWAVKMAGYGAGEILLTSMDGDGTKKGYDLGVTRAISDAVPIPVIASGGVGNLQHLVDGVTLGRADAVLAASIFHFREYTLPQAKEFMRAQGIEVRL</sequence>
<dbReference type="EC" id="4.3.2.10" evidence="1"/>
<dbReference type="EMBL" id="CP000934">
    <property type="protein sequence ID" value="ACE84351.1"/>
    <property type="molecule type" value="Genomic_DNA"/>
</dbReference>
<dbReference type="RefSeq" id="WP_012485842.1">
    <property type="nucleotide sequence ID" value="NC_010995.1"/>
</dbReference>
<dbReference type="SMR" id="B3PGA4"/>
<dbReference type="STRING" id="498211.CJA_0159"/>
<dbReference type="KEGG" id="cja:CJA_0159"/>
<dbReference type="eggNOG" id="COG0107">
    <property type="taxonomic scope" value="Bacteria"/>
</dbReference>
<dbReference type="HOGENOM" id="CLU_048577_4_0_6"/>
<dbReference type="OrthoDB" id="9781903at2"/>
<dbReference type="UniPathway" id="UPA00031">
    <property type="reaction ID" value="UER00010"/>
</dbReference>
<dbReference type="Proteomes" id="UP000001036">
    <property type="component" value="Chromosome"/>
</dbReference>
<dbReference type="GO" id="GO:0005737">
    <property type="term" value="C:cytoplasm"/>
    <property type="evidence" value="ECO:0007669"/>
    <property type="project" value="UniProtKB-SubCell"/>
</dbReference>
<dbReference type="GO" id="GO:0000107">
    <property type="term" value="F:imidazoleglycerol-phosphate synthase activity"/>
    <property type="evidence" value="ECO:0007669"/>
    <property type="project" value="UniProtKB-UniRule"/>
</dbReference>
<dbReference type="GO" id="GO:0016829">
    <property type="term" value="F:lyase activity"/>
    <property type="evidence" value="ECO:0007669"/>
    <property type="project" value="UniProtKB-KW"/>
</dbReference>
<dbReference type="GO" id="GO:0000105">
    <property type="term" value="P:L-histidine biosynthetic process"/>
    <property type="evidence" value="ECO:0007669"/>
    <property type="project" value="UniProtKB-UniRule"/>
</dbReference>
<dbReference type="CDD" id="cd04731">
    <property type="entry name" value="HisF"/>
    <property type="match status" value="1"/>
</dbReference>
<dbReference type="FunFam" id="3.20.20.70:FF:000006">
    <property type="entry name" value="Imidazole glycerol phosphate synthase subunit HisF"/>
    <property type="match status" value="1"/>
</dbReference>
<dbReference type="Gene3D" id="3.20.20.70">
    <property type="entry name" value="Aldolase class I"/>
    <property type="match status" value="1"/>
</dbReference>
<dbReference type="HAMAP" id="MF_01013">
    <property type="entry name" value="HisF"/>
    <property type="match status" value="1"/>
</dbReference>
<dbReference type="InterPro" id="IPR013785">
    <property type="entry name" value="Aldolase_TIM"/>
</dbReference>
<dbReference type="InterPro" id="IPR006062">
    <property type="entry name" value="His_biosynth"/>
</dbReference>
<dbReference type="InterPro" id="IPR004651">
    <property type="entry name" value="HisF"/>
</dbReference>
<dbReference type="InterPro" id="IPR050064">
    <property type="entry name" value="IGPS_HisA/HisF"/>
</dbReference>
<dbReference type="InterPro" id="IPR011060">
    <property type="entry name" value="RibuloseP-bd_barrel"/>
</dbReference>
<dbReference type="NCBIfam" id="TIGR00735">
    <property type="entry name" value="hisF"/>
    <property type="match status" value="1"/>
</dbReference>
<dbReference type="PANTHER" id="PTHR21235:SF2">
    <property type="entry name" value="IMIDAZOLE GLYCEROL PHOSPHATE SYNTHASE HISHF"/>
    <property type="match status" value="1"/>
</dbReference>
<dbReference type="PANTHER" id="PTHR21235">
    <property type="entry name" value="IMIDAZOLE GLYCEROL PHOSPHATE SYNTHASE SUBUNIT HISF/H IGP SYNTHASE SUBUNIT HISF/H"/>
    <property type="match status" value="1"/>
</dbReference>
<dbReference type="Pfam" id="PF00977">
    <property type="entry name" value="His_biosynth"/>
    <property type="match status" value="1"/>
</dbReference>
<dbReference type="SUPFAM" id="SSF51366">
    <property type="entry name" value="Ribulose-phoshate binding barrel"/>
    <property type="match status" value="1"/>
</dbReference>
<organism>
    <name type="scientific">Cellvibrio japonicus (strain Ueda107)</name>
    <name type="common">Pseudomonas fluorescens subsp. cellulosa</name>
    <dbReference type="NCBI Taxonomy" id="498211"/>
    <lineage>
        <taxon>Bacteria</taxon>
        <taxon>Pseudomonadati</taxon>
        <taxon>Pseudomonadota</taxon>
        <taxon>Gammaproteobacteria</taxon>
        <taxon>Cellvibrionales</taxon>
        <taxon>Cellvibrionaceae</taxon>
        <taxon>Cellvibrio</taxon>
    </lineage>
</organism>
<protein>
    <recommendedName>
        <fullName evidence="1">Imidazole glycerol phosphate synthase subunit HisF</fullName>
        <ecNumber evidence="1">4.3.2.10</ecNumber>
    </recommendedName>
    <alternativeName>
        <fullName evidence="1">IGP synthase cyclase subunit</fullName>
    </alternativeName>
    <alternativeName>
        <fullName evidence="1">IGP synthase subunit HisF</fullName>
    </alternativeName>
    <alternativeName>
        <fullName evidence="1">ImGP synthase subunit HisF</fullName>
        <shortName evidence="1">IGPS subunit HisF</shortName>
    </alternativeName>
</protein>
<accession>B3PGA4</accession>
<comment type="function">
    <text evidence="1">IGPS catalyzes the conversion of PRFAR and glutamine to IGP, AICAR and glutamate. The HisF subunit catalyzes the cyclization activity that produces IGP and AICAR from PRFAR using the ammonia provided by the HisH subunit.</text>
</comment>
<comment type="catalytic activity">
    <reaction evidence="1">
        <text>5-[(5-phospho-1-deoxy-D-ribulos-1-ylimino)methylamino]-1-(5-phospho-beta-D-ribosyl)imidazole-4-carboxamide + L-glutamine = D-erythro-1-(imidazol-4-yl)glycerol 3-phosphate + 5-amino-1-(5-phospho-beta-D-ribosyl)imidazole-4-carboxamide + L-glutamate + H(+)</text>
        <dbReference type="Rhea" id="RHEA:24793"/>
        <dbReference type="ChEBI" id="CHEBI:15378"/>
        <dbReference type="ChEBI" id="CHEBI:29985"/>
        <dbReference type="ChEBI" id="CHEBI:58278"/>
        <dbReference type="ChEBI" id="CHEBI:58359"/>
        <dbReference type="ChEBI" id="CHEBI:58475"/>
        <dbReference type="ChEBI" id="CHEBI:58525"/>
        <dbReference type="EC" id="4.3.2.10"/>
    </reaction>
</comment>
<comment type="pathway">
    <text evidence="1">Amino-acid biosynthesis; L-histidine biosynthesis; L-histidine from 5-phospho-alpha-D-ribose 1-diphosphate: step 5/9.</text>
</comment>
<comment type="subunit">
    <text evidence="1">Heterodimer of HisH and HisF.</text>
</comment>
<comment type="subcellular location">
    <subcellularLocation>
        <location evidence="1">Cytoplasm</location>
    </subcellularLocation>
</comment>
<comment type="similarity">
    <text evidence="1">Belongs to the HisA/HisF family.</text>
</comment>
<name>HIS6_CELJU</name>
<evidence type="ECO:0000255" key="1">
    <source>
        <dbReference type="HAMAP-Rule" id="MF_01013"/>
    </source>
</evidence>